<accession>Q0KAH8</accession>
<evidence type="ECO:0000255" key="1">
    <source>
        <dbReference type="HAMAP-Rule" id="MF_01643"/>
    </source>
</evidence>
<evidence type="ECO:0000305" key="2"/>
<name>PURT_CUPNH</name>
<reference key="1">
    <citation type="journal article" date="2006" name="Nat. Biotechnol.">
        <title>Genome sequence of the bioplastic-producing 'Knallgas' bacterium Ralstonia eutropha H16.</title>
        <authorList>
            <person name="Pohlmann A."/>
            <person name="Fricke W.F."/>
            <person name="Reinecke F."/>
            <person name="Kusian B."/>
            <person name="Liesegang H."/>
            <person name="Cramm R."/>
            <person name="Eitinger T."/>
            <person name="Ewering C."/>
            <person name="Poetter M."/>
            <person name="Schwartz E."/>
            <person name="Strittmatter A."/>
            <person name="Voss I."/>
            <person name="Gottschalk G."/>
            <person name="Steinbuechel A."/>
            <person name="Friedrich B."/>
            <person name="Bowien B."/>
        </authorList>
    </citation>
    <scope>NUCLEOTIDE SEQUENCE [LARGE SCALE GENOMIC DNA]</scope>
    <source>
        <strain>ATCC 17699 / DSM 428 / KCTC 22496 / NCIMB 10442 / H16 / Stanier 337</strain>
    </source>
</reference>
<protein>
    <recommendedName>
        <fullName evidence="1">Formate-dependent phosphoribosylglycinamide formyltransferase</fullName>
        <ecNumber evidence="1">6.3.1.21</ecNumber>
    </recommendedName>
    <alternativeName>
        <fullName evidence="1">5'-phosphoribosylglycinamide transformylase 2</fullName>
    </alternativeName>
    <alternativeName>
        <fullName evidence="1">Formate-dependent GAR transformylase</fullName>
    </alternativeName>
    <alternativeName>
        <fullName evidence="1">GAR transformylase 2</fullName>
        <shortName evidence="1">GART 2</shortName>
    </alternativeName>
    <alternativeName>
        <fullName evidence="1">Non-folate glycinamide ribonucleotide transformylase</fullName>
    </alternativeName>
    <alternativeName>
        <fullName evidence="1">Phosphoribosylglycinamide formyltransferase 2</fullName>
    </alternativeName>
</protein>
<dbReference type="EC" id="6.3.1.21" evidence="1"/>
<dbReference type="EMBL" id="AM260479">
    <property type="protein sequence ID" value="CAJ92993.1"/>
    <property type="status" value="ALT_INIT"/>
    <property type="molecule type" value="Genomic_DNA"/>
</dbReference>
<dbReference type="SMR" id="Q0KAH8"/>
<dbReference type="STRING" id="381666.H16_A1892"/>
<dbReference type="KEGG" id="reh:H16_A1892"/>
<dbReference type="eggNOG" id="COG0027">
    <property type="taxonomic scope" value="Bacteria"/>
</dbReference>
<dbReference type="HOGENOM" id="CLU_011534_1_3_4"/>
<dbReference type="OrthoDB" id="9804625at2"/>
<dbReference type="UniPathway" id="UPA00074">
    <property type="reaction ID" value="UER00127"/>
</dbReference>
<dbReference type="Proteomes" id="UP000008210">
    <property type="component" value="Chromosome 1"/>
</dbReference>
<dbReference type="GO" id="GO:0005829">
    <property type="term" value="C:cytosol"/>
    <property type="evidence" value="ECO:0007669"/>
    <property type="project" value="TreeGrafter"/>
</dbReference>
<dbReference type="GO" id="GO:0005524">
    <property type="term" value="F:ATP binding"/>
    <property type="evidence" value="ECO:0007669"/>
    <property type="project" value="UniProtKB-UniRule"/>
</dbReference>
<dbReference type="GO" id="GO:0000287">
    <property type="term" value="F:magnesium ion binding"/>
    <property type="evidence" value="ECO:0007669"/>
    <property type="project" value="InterPro"/>
</dbReference>
<dbReference type="GO" id="GO:0043815">
    <property type="term" value="F:phosphoribosylglycinamide formyltransferase 2 activity"/>
    <property type="evidence" value="ECO:0007669"/>
    <property type="project" value="UniProtKB-UniRule"/>
</dbReference>
<dbReference type="GO" id="GO:0004644">
    <property type="term" value="F:phosphoribosylglycinamide formyltransferase activity"/>
    <property type="evidence" value="ECO:0007669"/>
    <property type="project" value="InterPro"/>
</dbReference>
<dbReference type="GO" id="GO:0006189">
    <property type="term" value="P:'de novo' IMP biosynthetic process"/>
    <property type="evidence" value="ECO:0007669"/>
    <property type="project" value="UniProtKB-UniRule"/>
</dbReference>
<dbReference type="Gene3D" id="3.40.50.20">
    <property type="match status" value="1"/>
</dbReference>
<dbReference type="Gene3D" id="3.30.1490.20">
    <property type="entry name" value="ATP-grasp fold, A domain"/>
    <property type="match status" value="1"/>
</dbReference>
<dbReference type="Gene3D" id="3.30.470.20">
    <property type="entry name" value="ATP-grasp fold, B domain"/>
    <property type="match status" value="1"/>
</dbReference>
<dbReference type="HAMAP" id="MF_01643">
    <property type="entry name" value="PurT"/>
    <property type="match status" value="1"/>
</dbReference>
<dbReference type="InterPro" id="IPR011761">
    <property type="entry name" value="ATP-grasp"/>
</dbReference>
<dbReference type="InterPro" id="IPR003135">
    <property type="entry name" value="ATP-grasp_carboxylate-amine"/>
</dbReference>
<dbReference type="InterPro" id="IPR013815">
    <property type="entry name" value="ATP_grasp_subdomain_1"/>
</dbReference>
<dbReference type="InterPro" id="IPR016185">
    <property type="entry name" value="PreATP-grasp_dom_sf"/>
</dbReference>
<dbReference type="InterPro" id="IPR005862">
    <property type="entry name" value="PurT"/>
</dbReference>
<dbReference type="InterPro" id="IPR054350">
    <property type="entry name" value="PurT/PurK_preATP-grasp"/>
</dbReference>
<dbReference type="InterPro" id="IPR048740">
    <property type="entry name" value="PurT_C"/>
</dbReference>
<dbReference type="InterPro" id="IPR011054">
    <property type="entry name" value="Rudment_hybrid_motif"/>
</dbReference>
<dbReference type="NCBIfam" id="NF006766">
    <property type="entry name" value="PRK09288.1"/>
    <property type="match status" value="1"/>
</dbReference>
<dbReference type="NCBIfam" id="TIGR01142">
    <property type="entry name" value="purT"/>
    <property type="match status" value="1"/>
</dbReference>
<dbReference type="PANTHER" id="PTHR43055">
    <property type="entry name" value="FORMATE-DEPENDENT PHOSPHORIBOSYLGLYCINAMIDE FORMYLTRANSFERASE"/>
    <property type="match status" value="1"/>
</dbReference>
<dbReference type="PANTHER" id="PTHR43055:SF1">
    <property type="entry name" value="FORMATE-DEPENDENT PHOSPHORIBOSYLGLYCINAMIDE FORMYLTRANSFERASE"/>
    <property type="match status" value="1"/>
</dbReference>
<dbReference type="Pfam" id="PF02222">
    <property type="entry name" value="ATP-grasp"/>
    <property type="match status" value="1"/>
</dbReference>
<dbReference type="Pfam" id="PF21244">
    <property type="entry name" value="PurT_C"/>
    <property type="match status" value="1"/>
</dbReference>
<dbReference type="Pfam" id="PF22660">
    <property type="entry name" value="RS_preATP-grasp-like"/>
    <property type="match status" value="1"/>
</dbReference>
<dbReference type="SUPFAM" id="SSF56059">
    <property type="entry name" value="Glutathione synthetase ATP-binding domain-like"/>
    <property type="match status" value="1"/>
</dbReference>
<dbReference type="SUPFAM" id="SSF52440">
    <property type="entry name" value="PreATP-grasp domain"/>
    <property type="match status" value="1"/>
</dbReference>
<dbReference type="SUPFAM" id="SSF51246">
    <property type="entry name" value="Rudiment single hybrid motif"/>
    <property type="match status" value="1"/>
</dbReference>
<dbReference type="PROSITE" id="PS50975">
    <property type="entry name" value="ATP_GRASP"/>
    <property type="match status" value="1"/>
</dbReference>
<keyword id="KW-0067">ATP-binding</keyword>
<keyword id="KW-0436">Ligase</keyword>
<keyword id="KW-0460">Magnesium</keyword>
<keyword id="KW-0479">Metal-binding</keyword>
<keyword id="KW-0547">Nucleotide-binding</keyword>
<keyword id="KW-0658">Purine biosynthesis</keyword>
<keyword id="KW-1185">Reference proteome</keyword>
<comment type="function">
    <text evidence="1">Involved in the de novo purine biosynthesis. Catalyzes the transfer of formate to 5-phospho-ribosyl-glycinamide (GAR), producing 5-phospho-ribosyl-N-formylglycinamide (FGAR). Formate is provided by PurU via hydrolysis of 10-formyl-tetrahydrofolate.</text>
</comment>
<comment type="catalytic activity">
    <reaction evidence="1">
        <text>N(1)-(5-phospho-beta-D-ribosyl)glycinamide + formate + ATP = N(2)-formyl-N(1)-(5-phospho-beta-D-ribosyl)glycinamide + ADP + phosphate + H(+)</text>
        <dbReference type="Rhea" id="RHEA:24829"/>
        <dbReference type="ChEBI" id="CHEBI:15378"/>
        <dbReference type="ChEBI" id="CHEBI:15740"/>
        <dbReference type="ChEBI" id="CHEBI:30616"/>
        <dbReference type="ChEBI" id="CHEBI:43474"/>
        <dbReference type="ChEBI" id="CHEBI:143788"/>
        <dbReference type="ChEBI" id="CHEBI:147286"/>
        <dbReference type="ChEBI" id="CHEBI:456216"/>
        <dbReference type="EC" id="6.3.1.21"/>
    </reaction>
    <physiologicalReaction direction="left-to-right" evidence="1">
        <dbReference type="Rhea" id="RHEA:24830"/>
    </physiologicalReaction>
</comment>
<comment type="pathway">
    <text evidence="1">Purine metabolism; IMP biosynthesis via de novo pathway; N(2)-formyl-N(1)-(5-phospho-D-ribosyl)glycinamide from N(1)-(5-phospho-D-ribosyl)glycinamide (formate route): step 1/1.</text>
</comment>
<comment type="subunit">
    <text evidence="1">Homodimer.</text>
</comment>
<comment type="similarity">
    <text evidence="1">Belongs to the PurK/PurT family.</text>
</comment>
<comment type="sequence caution" evidence="2">
    <conflict type="erroneous initiation">
        <sequence resource="EMBL-CDS" id="CAJ92993"/>
    </conflict>
</comment>
<gene>
    <name evidence="1" type="primary">purT</name>
    <name type="ordered locus">H16_A1892</name>
</gene>
<feature type="chain" id="PRO_0000319219" description="Formate-dependent phosphoribosylglycinamide formyltransferase">
    <location>
        <begin position="1"/>
        <end position="401"/>
    </location>
</feature>
<feature type="domain" description="ATP-grasp" evidence="1">
    <location>
        <begin position="120"/>
        <end position="315"/>
    </location>
</feature>
<feature type="binding site" evidence="1">
    <location>
        <begin position="22"/>
        <end position="23"/>
    </location>
    <ligand>
        <name>N(1)-(5-phospho-beta-D-ribosyl)glycinamide</name>
        <dbReference type="ChEBI" id="CHEBI:143788"/>
    </ligand>
</feature>
<feature type="binding site" evidence="1">
    <location>
        <position position="82"/>
    </location>
    <ligand>
        <name>N(1)-(5-phospho-beta-D-ribosyl)glycinamide</name>
        <dbReference type="ChEBI" id="CHEBI:143788"/>
    </ligand>
</feature>
<feature type="binding site" evidence="1">
    <location>
        <position position="115"/>
    </location>
    <ligand>
        <name>ATP</name>
        <dbReference type="ChEBI" id="CHEBI:30616"/>
    </ligand>
</feature>
<feature type="binding site" evidence="1">
    <location>
        <position position="157"/>
    </location>
    <ligand>
        <name>ATP</name>
        <dbReference type="ChEBI" id="CHEBI:30616"/>
    </ligand>
</feature>
<feature type="binding site" evidence="1">
    <location>
        <begin position="162"/>
        <end position="167"/>
    </location>
    <ligand>
        <name>ATP</name>
        <dbReference type="ChEBI" id="CHEBI:30616"/>
    </ligand>
</feature>
<feature type="binding site" evidence="1">
    <location>
        <begin position="197"/>
        <end position="200"/>
    </location>
    <ligand>
        <name>ATP</name>
        <dbReference type="ChEBI" id="CHEBI:30616"/>
    </ligand>
</feature>
<feature type="binding site" evidence="1">
    <location>
        <position position="205"/>
    </location>
    <ligand>
        <name>ATP</name>
        <dbReference type="ChEBI" id="CHEBI:30616"/>
    </ligand>
</feature>
<feature type="binding site" evidence="1">
    <location>
        <position position="274"/>
    </location>
    <ligand>
        <name>Mg(2+)</name>
        <dbReference type="ChEBI" id="CHEBI:18420"/>
    </ligand>
</feature>
<feature type="binding site" evidence="1">
    <location>
        <position position="286"/>
    </location>
    <ligand>
        <name>Mg(2+)</name>
        <dbReference type="ChEBI" id="CHEBI:18420"/>
    </ligand>
</feature>
<feature type="binding site" evidence="1">
    <location>
        <position position="293"/>
    </location>
    <ligand>
        <name>N(1)-(5-phospho-beta-D-ribosyl)glycinamide</name>
        <dbReference type="ChEBI" id="CHEBI:143788"/>
    </ligand>
</feature>
<feature type="binding site" evidence="1">
    <location>
        <position position="362"/>
    </location>
    <ligand>
        <name>N(1)-(5-phospho-beta-D-ribosyl)glycinamide</name>
        <dbReference type="ChEBI" id="CHEBI:143788"/>
    </ligand>
</feature>
<feature type="binding site" evidence="1">
    <location>
        <begin position="369"/>
        <end position="370"/>
    </location>
    <ligand>
        <name>N(1)-(5-phospho-beta-D-ribosyl)glycinamide</name>
        <dbReference type="ChEBI" id="CHEBI:143788"/>
    </ligand>
</feature>
<organism>
    <name type="scientific">Cupriavidus necator (strain ATCC 17699 / DSM 428 / KCTC 22496 / NCIMB 10442 / H16 / Stanier 337)</name>
    <name type="common">Ralstonia eutropha</name>
    <dbReference type="NCBI Taxonomy" id="381666"/>
    <lineage>
        <taxon>Bacteria</taxon>
        <taxon>Pseudomonadati</taxon>
        <taxon>Pseudomonadota</taxon>
        <taxon>Betaproteobacteria</taxon>
        <taxon>Burkholderiales</taxon>
        <taxon>Burkholderiaceae</taxon>
        <taxon>Cupriavidus</taxon>
    </lineage>
</organism>
<proteinExistence type="inferred from homology"/>
<sequence>MTTLGTPLSPSATKVMLLGSGELGKEVLIALQRLGVETIAVDRYDNAPGQQVAHHARTIAMSDPDQLKALIEAEKPHLVVPEIEAIATPMLETLEAAGTVRVIPTARAARLTMDREGIRRLAAESLGLPTSPYKFCDSLDELQAAIDGGIGYPCVVKPVMSSSGKGQSKIDGPEGVKAAWDYAMAGGRVSHGRVIVEGFIDFDYEITLLTVRAMGASGQVETQFCAPIGHVQVSGDYVESWQPQPMHPAALETAQRIAQAVTADLGGMGLFGVELFVKGEQVWFSEVSPRPHDTGMVTMATQWQNEFELHARAILGLPVDTTLRSPGASAVIYGGVDAQGVVFDGVDQALSVPQTEVRLFGKPESFVKRRMGVALAYADDVDTARTRAKEAASRVRPRAVG</sequence>